<name>MAVS_MOUSE</name>
<gene>
    <name evidence="11" type="primary">Mavs</name>
    <name evidence="9" type="synonym">Ips1</name>
    <name evidence="9" type="synonym">Visa</name>
</gene>
<feature type="chain" id="PRO_0000144097" description="Mitochondrial antiviral-signaling protein">
    <location>
        <begin position="1"/>
        <end position="503"/>
    </location>
</feature>
<feature type="topological domain" description="Cytoplasmic" evidence="10">
    <location>
        <begin position="1"/>
        <end position="478"/>
    </location>
</feature>
<feature type="transmembrane region" description="Helical" evidence="2">
    <location>
        <begin position="479"/>
        <end position="496"/>
    </location>
</feature>
<feature type="topological domain" description="Mitochondrial intermembrane" evidence="10">
    <location>
        <begin position="497"/>
        <end position="503"/>
    </location>
</feature>
<feature type="domain" description="CARD">
    <location>
        <begin position="10"/>
        <end position="77"/>
    </location>
</feature>
<feature type="region of interest" description="Required for interaction with NLRX1" evidence="1">
    <location>
        <begin position="10"/>
        <end position="77"/>
    </location>
</feature>
<feature type="region of interest" description="Disordered" evidence="3">
    <location>
        <begin position="119"/>
        <end position="202"/>
    </location>
</feature>
<feature type="region of interest" description="Interaction with TRAF2" evidence="1">
    <location>
        <begin position="143"/>
        <end position="147"/>
    </location>
</feature>
<feature type="region of interest" description="Interaction with TRAF6 1" evidence="1">
    <location>
        <begin position="153"/>
        <end position="158"/>
    </location>
</feature>
<feature type="region of interest" description="Interaction with DHX33" evidence="7">
    <location>
        <begin position="337"/>
        <end position="503"/>
    </location>
</feature>
<feature type="region of interest" description="Disordered" evidence="3">
    <location>
        <begin position="346"/>
        <end position="398"/>
    </location>
</feature>
<feature type="region of interest" description="Interaction with TRAF6 2" evidence="1">
    <location>
        <begin position="431"/>
        <end position="436"/>
    </location>
</feature>
<feature type="region of interest" description="Disordered" evidence="3">
    <location>
        <begin position="446"/>
        <end position="466"/>
    </location>
</feature>
<feature type="short sequence motif" description="pLxIS motif" evidence="1">
    <location>
        <begin position="415"/>
        <end position="418"/>
    </location>
</feature>
<feature type="compositionally biased region" description="Polar residues" evidence="3">
    <location>
        <begin position="145"/>
        <end position="166"/>
    </location>
</feature>
<feature type="compositionally biased region" description="Polar residues" evidence="3">
    <location>
        <begin position="178"/>
        <end position="189"/>
    </location>
</feature>
<feature type="compositionally biased region" description="Basic and acidic residues" evidence="3">
    <location>
        <begin position="356"/>
        <end position="365"/>
    </location>
</feature>
<feature type="compositionally biased region" description="Polar residues" evidence="3">
    <location>
        <begin position="371"/>
        <end position="387"/>
    </location>
</feature>
<feature type="site" description="Cleavage; by CASP3" evidence="1">
    <location>
        <begin position="405"/>
        <end position="406"/>
    </location>
</feature>
<feature type="modified residue" description="Phosphoserine" evidence="12 13">
    <location>
        <position position="152"/>
    </location>
</feature>
<feature type="modified residue" description="Phosphoserine" evidence="1">
    <location>
        <position position="157"/>
    </location>
</feature>
<feature type="modified residue" description="Phosphoserine" evidence="13">
    <location>
        <position position="172"/>
    </location>
</feature>
<feature type="modified residue" description="Phosphoserine" evidence="1">
    <location>
        <position position="186"/>
    </location>
</feature>
<feature type="modified residue" description="Phosphoserine" evidence="1">
    <location>
        <position position="220"/>
    </location>
</feature>
<feature type="modified residue" description="Asymmetric dimethylarginine" evidence="14">
    <location>
        <position position="234"/>
    </location>
</feature>
<feature type="modified residue" description="Phosphoserine" evidence="1">
    <location>
        <position position="251"/>
    </location>
</feature>
<feature type="modified residue" description="Phosphoserine" evidence="1">
    <location>
        <position position="256"/>
    </location>
</feature>
<feature type="modified residue" description="Phosphoserine" evidence="12 13">
    <location>
        <position position="384"/>
    </location>
</feature>
<feature type="modified residue" description="Phosphoserine; by TBK1" evidence="1">
    <location>
        <position position="418"/>
    </location>
</feature>
<feature type="lipid moiety-binding region" description="S-palmitoyl cysteine" evidence="1">
    <location>
        <position position="79"/>
    </location>
</feature>
<feature type="cross-link" description="Glycyl lysine isopeptide (Lys-Gly) (interchain with G-Cter in ubiquitin)" evidence="1">
    <location>
        <position position="7"/>
    </location>
</feature>
<feature type="cross-link" description="Glycyl lysine isopeptide (Lys-Gly) (interchain with G-Cter in ubiquitin)" evidence="1">
    <location>
        <position position="10"/>
    </location>
</feature>
<feature type="cross-link" description="Glycyl lysine isopeptide (Lys-Gly) (interchain with G-Cter in ubiquitin)" evidence="1">
    <location>
        <position position="302"/>
    </location>
</feature>
<dbReference type="EMBL" id="DQ174271">
    <property type="protein sequence ID" value="AAZ80418.1"/>
    <property type="molecule type" value="mRNA"/>
</dbReference>
<dbReference type="EMBL" id="DQ167127">
    <property type="protein sequence ID" value="ABA54891.1"/>
    <property type="molecule type" value="mRNA"/>
</dbReference>
<dbReference type="EMBL" id="AK028421">
    <property type="protein sequence ID" value="BAC25940.1"/>
    <property type="molecule type" value="mRNA"/>
</dbReference>
<dbReference type="EMBL" id="BC020006">
    <property type="protein sequence ID" value="AAH20006.1"/>
    <property type="molecule type" value="mRNA"/>
</dbReference>
<dbReference type="EMBL" id="BC025825">
    <property type="protein sequence ID" value="AAH25825.1"/>
    <property type="molecule type" value="mRNA"/>
</dbReference>
<dbReference type="EMBL" id="BC031352">
    <property type="protein sequence ID" value="AAH31352.1"/>
    <property type="molecule type" value="mRNA"/>
</dbReference>
<dbReference type="EMBL" id="BC037391">
    <property type="protein sequence ID" value="AAH37391.1"/>
    <property type="molecule type" value="mRNA"/>
</dbReference>
<dbReference type="CCDS" id="CCDS16760.1"/>
<dbReference type="RefSeq" id="NP_001193314.1">
    <property type="nucleotide sequence ID" value="NM_001206385.1"/>
</dbReference>
<dbReference type="RefSeq" id="NP_659137.1">
    <property type="nucleotide sequence ID" value="NM_144888.2"/>
</dbReference>
<dbReference type="PDB" id="4GHU">
    <property type="method" value="X-ray"/>
    <property type="resolution" value="2.20 A"/>
    <property type="chains" value="B=138-158"/>
</dbReference>
<dbReference type="PDBsum" id="4GHU"/>
<dbReference type="SMR" id="Q8VCF0"/>
<dbReference type="BioGRID" id="230748">
    <property type="interactions" value="33"/>
</dbReference>
<dbReference type="CORUM" id="Q8VCF0"/>
<dbReference type="DIP" id="DIP-43890N"/>
<dbReference type="FunCoup" id="Q8VCF0">
    <property type="interactions" value="646"/>
</dbReference>
<dbReference type="IntAct" id="Q8VCF0">
    <property type="interactions" value="5"/>
</dbReference>
<dbReference type="MINT" id="Q8VCF0"/>
<dbReference type="STRING" id="10090.ENSMUSP00000105828"/>
<dbReference type="GlyGen" id="Q8VCF0">
    <property type="glycosylation" value="17 sites, 1 O-linked glycan (16 sites)"/>
</dbReference>
<dbReference type="iPTMnet" id="Q8VCF0"/>
<dbReference type="PhosphoSitePlus" id="Q8VCF0"/>
<dbReference type="SwissPalm" id="Q8VCF0"/>
<dbReference type="jPOST" id="Q8VCF0"/>
<dbReference type="PaxDb" id="10090-ENSMUSP00000105828"/>
<dbReference type="PeptideAtlas" id="Q8VCF0"/>
<dbReference type="ProteomicsDB" id="292272"/>
<dbReference type="Pumba" id="Q8VCF0"/>
<dbReference type="Antibodypedia" id="3363">
    <property type="antibodies" value="683 antibodies from 43 providers"/>
</dbReference>
<dbReference type="DNASU" id="228607"/>
<dbReference type="Ensembl" id="ENSMUST00000041362.12">
    <property type="protein sequence ID" value="ENSMUSP00000038339.6"/>
    <property type="gene ID" value="ENSMUSG00000037523.14"/>
</dbReference>
<dbReference type="Ensembl" id="ENSMUST00000110199.3">
    <property type="protein sequence ID" value="ENSMUSP00000105828.3"/>
    <property type="gene ID" value="ENSMUSG00000037523.14"/>
</dbReference>
<dbReference type="GeneID" id="228607"/>
<dbReference type="KEGG" id="mmu:228607"/>
<dbReference type="UCSC" id="uc008mld.2">
    <property type="organism name" value="mouse"/>
</dbReference>
<dbReference type="AGR" id="MGI:2444773"/>
<dbReference type="CTD" id="57506"/>
<dbReference type="MGI" id="MGI:2444773">
    <property type="gene designation" value="Mavs"/>
</dbReference>
<dbReference type="VEuPathDB" id="HostDB:ENSMUSG00000037523"/>
<dbReference type="eggNOG" id="ENOG502SAUA">
    <property type="taxonomic scope" value="Eukaryota"/>
</dbReference>
<dbReference type="GeneTree" id="ENSGT00510000049120"/>
<dbReference type="HOGENOM" id="CLU_042052_0_0_1"/>
<dbReference type="InParanoid" id="Q8VCF0"/>
<dbReference type="OMA" id="PHIDQKF"/>
<dbReference type="OrthoDB" id="9909785at2759"/>
<dbReference type="PhylomeDB" id="Q8VCF0"/>
<dbReference type="TreeFam" id="TF333444"/>
<dbReference type="Reactome" id="R-MMU-168928">
    <property type="pathway name" value="DDX58/IFIH1-mediated induction of interferon-alpha/beta"/>
</dbReference>
<dbReference type="Reactome" id="R-MMU-936440">
    <property type="pathway name" value="Negative regulators of DDX58/IFIH1 signaling"/>
</dbReference>
<dbReference type="Reactome" id="R-MMU-9833482">
    <property type="pathway name" value="PKR-mediated signaling"/>
</dbReference>
<dbReference type="BioGRID-ORCS" id="228607">
    <property type="hits" value="3 hits in 75 CRISPR screens"/>
</dbReference>
<dbReference type="ChiTaRS" id="Mavs">
    <property type="organism name" value="mouse"/>
</dbReference>
<dbReference type="EvolutionaryTrace" id="Q8VCF0"/>
<dbReference type="PRO" id="PR:Q8VCF0"/>
<dbReference type="Proteomes" id="UP000000589">
    <property type="component" value="Chromosome 2"/>
</dbReference>
<dbReference type="RNAct" id="Q8VCF0">
    <property type="molecule type" value="protein"/>
</dbReference>
<dbReference type="Bgee" id="ENSMUSG00000037523">
    <property type="expression patterns" value="Expressed in epithelium of small intestine and 238 other cell types or tissues"/>
</dbReference>
<dbReference type="ExpressionAtlas" id="Q8VCF0">
    <property type="expression patterns" value="baseline and differential"/>
</dbReference>
<dbReference type="GO" id="GO:0005741">
    <property type="term" value="C:mitochondrial outer membrane"/>
    <property type="evidence" value="ECO:0000304"/>
    <property type="project" value="Reactome"/>
</dbReference>
<dbReference type="GO" id="GO:0005739">
    <property type="term" value="C:mitochondrion"/>
    <property type="evidence" value="ECO:0000314"/>
    <property type="project" value="UniProtKB"/>
</dbReference>
<dbReference type="GO" id="GO:0005777">
    <property type="term" value="C:peroxisome"/>
    <property type="evidence" value="ECO:0000314"/>
    <property type="project" value="UniProtKB"/>
</dbReference>
<dbReference type="GO" id="GO:0035591">
    <property type="term" value="F:signaling adaptor activity"/>
    <property type="evidence" value="ECO:0000314"/>
    <property type="project" value="UniProtKB"/>
</dbReference>
<dbReference type="GO" id="GO:0002218">
    <property type="term" value="P:activation of innate immune response"/>
    <property type="evidence" value="ECO:0000250"/>
    <property type="project" value="UniProtKB"/>
</dbReference>
<dbReference type="GO" id="GO:0071360">
    <property type="term" value="P:cellular response to exogenous dsRNA"/>
    <property type="evidence" value="ECO:0000250"/>
    <property type="project" value="UniProtKB"/>
</dbReference>
<dbReference type="GO" id="GO:0035458">
    <property type="term" value="P:cellular response to interferon-beta"/>
    <property type="evidence" value="ECO:0000266"/>
    <property type="project" value="MGI"/>
</dbReference>
<dbReference type="GO" id="GO:0042742">
    <property type="term" value="P:defense response to bacterium"/>
    <property type="evidence" value="ECO:0000250"/>
    <property type="project" value="UniProtKB"/>
</dbReference>
<dbReference type="GO" id="GO:0051607">
    <property type="term" value="P:defense response to virus"/>
    <property type="evidence" value="ECO:0007669"/>
    <property type="project" value="UniProtKB-KW"/>
</dbReference>
<dbReference type="GO" id="GO:0045087">
    <property type="term" value="P:innate immune response"/>
    <property type="evidence" value="ECO:0000250"/>
    <property type="project" value="UniProtKB"/>
</dbReference>
<dbReference type="GO" id="GO:0045071">
    <property type="term" value="P:negative regulation of viral genome replication"/>
    <property type="evidence" value="ECO:0000315"/>
    <property type="project" value="UniProtKB"/>
</dbReference>
<dbReference type="GO" id="GO:0002230">
    <property type="term" value="P:positive regulation of defense response to virus by host"/>
    <property type="evidence" value="ECO:0000315"/>
    <property type="project" value="MGI"/>
</dbReference>
<dbReference type="GO" id="GO:0032727">
    <property type="term" value="P:positive regulation of interferon-alpha production"/>
    <property type="evidence" value="ECO:0000315"/>
    <property type="project" value="MGI"/>
</dbReference>
<dbReference type="GO" id="GO:0032728">
    <property type="term" value="P:positive regulation of interferon-beta production"/>
    <property type="evidence" value="ECO:0000315"/>
    <property type="project" value="MGI"/>
</dbReference>
<dbReference type="GO" id="GO:0032755">
    <property type="term" value="P:positive regulation of interleukin-6 production"/>
    <property type="evidence" value="ECO:0000315"/>
    <property type="project" value="MGI"/>
</dbReference>
<dbReference type="GO" id="GO:0002735">
    <property type="term" value="P:positive regulation of myeloid dendritic cell cytokine production"/>
    <property type="evidence" value="ECO:0000315"/>
    <property type="project" value="UniProtKB"/>
</dbReference>
<dbReference type="GO" id="GO:1900227">
    <property type="term" value="P:positive regulation of NLRP3 inflammasome complex assembly"/>
    <property type="evidence" value="ECO:0000314"/>
    <property type="project" value="UniProtKB"/>
</dbReference>
<dbReference type="GO" id="GO:0060760">
    <property type="term" value="P:positive regulation of response to cytokine stimulus"/>
    <property type="evidence" value="ECO:0000250"/>
    <property type="project" value="UniProtKB"/>
</dbReference>
<dbReference type="GO" id="GO:0032760">
    <property type="term" value="P:positive regulation of tumor necrosis factor production"/>
    <property type="evidence" value="ECO:0000250"/>
    <property type="project" value="UniProtKB"/>
</dbReference>
<dbReference type="GO" id="GO:0032481">
    <property type="term" value="P:positive regulation of type I interferon production"/>
    <property type="evidence" value="ECO:0000315"/>
    <property type="project" value="MGI"/>
</dbReference>
<dbReference type="GO" id="GO:0070585">
    <property type="term" value="P:protein localization to mitochondrion"/>
    <property type="evidence" value="ECO:0000314"/>
    <property type="project" value="UniProtKB"/>
</dbReference>
<dbReference type="GO" id="GO:0051262">
    <property type="term" value="P:protein tetramerization"/>
    <property type="evidence" value="ECO:0000266"/>
    <property type="project" value="MGI"/>
</dbReference>
<dbReference type="GO" id="GO:1900063">
    <property type="term" value="P:regulation of peroxisome organization"/>
    <property type="evidence" value="ECO:0000315"/>
    <property type="project" value="UniProtKB"/>
</dbReference>
<dbReference type="GO" id="GO:0039529">
    <property type="term" value="P:RIG-I signaling pathway"/>
    <property type="evidence" value="ECO:0000316"/>
    <property type="project" value="MGI"/>
</dbReference>
<dbReference type="GO" id="GO:0007165">
    <property type="term" value="P:signal transduction"/>
    <property type="evidence" value="ECO:0000315"/>
    <property type="project" value="UniProtKB"/>
</dbReference>
<dbReference type="CDD" id="cd08811">
    <property type="entry name" value="CARD_IPS1"/>
    <property type="match status" value="1"/>
</dbReference>
<dbReference type="FunFam" id="1.10.533.10:FF:000063">
    <property type="entry name" value="Mitochondrial antiviral-signaling protein"/>
    <property type="match status" value="1"/>
</dbReference>
<dbReference type="Gene3D" id="1.10.533.10">
    <property type="entry name" value="Death Domain, Fas"/>
    <property type="match status" value="1"/>
</dbReference>
<dbReference type="InterPro" id="IPR031964">
    <property type="entry name" value="CARD_dom"/>
</dbReference>
<dbReference type="InterPro" id="IPR042144">
    <property type="entry name" value="CARD_IPS1"/>
</dbReference>
<dbReference type="InterPro" id="IPR011029">
    <property type="entry name" value="DEATH-like_dom_sf"/>
</dbReference>
<dbReference type="InterPro" id="IPR052787">
    <property type="entry name" value="MAVS"/>
</dbReference>
<dbReference type="PANTHER" id="PTHR21446">
    <property type="entry name" value="DUF3504 DOMAIN-CONTAINING PROTEIN"/>
    <property type="match status" value="1"/>
</dbReference>
<dbReference type="PANTHER" id="PTHR21446:SF6">
    <property type="entry name" value="MITOCHONDRIAL ANTIVIRAL-SIGNALING PROTEIN"/>
    <property type="match status" value="1"/>
</dbReference>
<dbReference type="Pfam" id="PF16739">
    <property type="entry name" value="CARD_2"/>
    <property type="match status" value="1"/>
</dbReference>
<evidence type="ECO:0000250" key="1">
    <source>
        <dbReference type="UniProtKB" id="Q7Z434"/>
    </source>
</evidence>
<evidence type="ECO:0000255" key="2"/>
<evidence type="ECO:0000256" key="3">
    <source>
        <dbReference type="SAM" id="MobiDB-lite"/>
    </source>
</evidence>
<evidence type="ECO:0000269" key="4">
    <source>
    </source>
</evidence>
<evidence type="ECO:0000269" key="5">
    <source>
    </source>
</evidence>
<evidence type="ECO:0000269" key="6">
    <source>
    </source>
</evidence>
<evidence type="ECO:0000269" key="7">
    <source>
    </source>
</evidence>
<evidence type="ECO:0000269" key="8">
    <source>
    </source>
</evidence>
<evidence type="ECO:0000303" key="9">
    <source>
    </source>
</evidence>
<evidence type="ECO:0000305" key="10"/>
<evidence type="ECO:0000312" key="11">
    <source>
        <dbReference type="MGI" id="MGI:2444773"/>
    </source>
</evidence>
<evidence type="ECO:0007744" key="12">
    <source>
    </source>
</evidence>
<evidence type="ECO:0007744" key="13">
    <source>
    </source>
</evidence>
<evidence type="ECO:0007744" key="14">
    <source>
    </source>
</evidence>
<comment type="function">
    <text evidence="1 6 7">Adapter required for innate immune defense against viruses (PubMed:24037184). Acts downstream of DHX33, RIGI and IFIH1/MDA5, which detect intracellular dsRNA produced during viral replication, to coordinate pathways leading to the activation of NF-kappa-B, IRF3 and IRF7, and to the subsequent induction of antiviral cytokines such as IFN-beta and RANTES (CCL5) (PubMed:24037184). Peroxisomal and mitochondrial MAVS act sequentially to create an antiviral cellular state (By similarity). Upon viral infection, peroxisomal MAVS induces the rapid interferon-independent expression of defense factors that provide short-term protection, whereas mitochondrial MAVS activates an interferon-dependent signaling pathway with delayed kinetics, which amplifies and stabilizes the antiviral response (By similarity). May activate the same pathways following detection of extracellular dsRNA by TLR3 (By similarity). May protect cells from apoptosis (By similarity). Involved in NLRP3 inflammasome activation by mediating NLRP3 recruitment to mitochondria (PubMed:23582325).</text>
</comment>
<comment type="subunit">
    <text evidence="1 4 5 6 7 8">Self-associates and polymerizes (via CARD domains) to form 400 nM long three-stranded helical filaments on mitochondria, filament nucleation requires interaction with RIGI whose CARD domains act as a template for filament assembly (By similarity). Interacts with RIGI, IFIH1/MDA5, TRAF2, TRAF6 and C1QBP (By similarity). May interact with FADD, RIPK1, IKBKE, CHUK and IKBKB (By similarity). Interacts (when phosphorylated) with IRF3; following activation and phosphorylation on the pLxIS motif by TBK1, recruits IRF3 (By similarity). Interacts with NLRX1 (By similarity). Interaction with NLRX1 requires the CARD domain (By similarity). Interacts with PSMA7 (By similarity). Interacts with TRAFD1 (PubMed:18849341). Interacts (via C-terminus) with PCBP2 in a complex containing MAVS/IPS1, PCBP2 and ITCH (By similarity). Interacts with CYLD (By similarity). Interacts with SRC (By similarity). Interacts with DHX58/LGP2 and IKBKE (By similarity). Interacts with STING1 (By similarity). Interacts with IFIT3 (via N-terminus) (By similarity). Interacts with TBK1 only in the presence of IFIT3 (By similarity). Interacts with TTLL12; the interaction prevents MAVS binding to TBK1 and IKBKE (By similarity). Interacts with MUL1 (By similarity). Interacts with ANKRD17 (By similarity). Interacts with NDFIP1 (By similarity). Interacts with SMURF1; the interaction is mediated by NDFIP1 and leads to MAVS ubiquitination and degradation (PubMed:23087404). Interacts (via C-terminus) with GPATCH3; the interaction is markedly increased upon viral infection (By similarity). Directly interacts (via CARD domain) with ATG5 and ATG12, either as ATG5 and ATG12 monomers or as ATG12-ATG5 conjugates (By similarity). Interacts with DHX33 (via the helicase C-terminal domain) (PubMed:24037184). Interacts with DDX3X (via C-terminus); this interaction may occur rapidly, but transiently after viral infection (By similarity). The interaction with DDX3X potentiates MAVS-mediated IFNB induction (By similarity). Conversely inhibition of this interaction prevents MAVS-mediated IFNB induction (By similarity). Transiently interacts with TRAF3 early during viral infection (By similarity). Interacts with CLPB (By similarity). Interacts with TRAF3IP3 (By similarity). Interacts with TOMM70; the interaction is enhanced by virus infection (By similarity). Interacts with ZNFX1 (PubMed:31685995). Interacts with DHX15 (By similarity). Interacts with N4BP3; this interaction promotes the polyubiquitination of MAVS (By similarity). Interacts with TAX1BP1; this interaction induces MAVS polyubiquitination (By similarity). Interacts with NLRP3; promoting NLRP3 recruitment to mitochondria and activation of the NLRP3 inflammasome (PubMed:23582325). Interacts with ECSIT; this interaction bridges RIGI to the MAVS complex at the mitochondrion (By similarity). Interacts with UBL7; this interaction promotes MAVS 'Lys-27'-linked ubiquitination leading to type I interferon production (By similarity). Interacts (via transmembrane domain) with SMIM30/MAVI1 (via transmembrane domain); the interaction disrupts MAVS interaction with RIGI and inhibits MAVS aggregation, resulting in the repression of type I interferon signaling and innate immune responses (By similarity).</text>
</comment>
<comment type="interaction">
    <interactant intactId="EBI-3862816">
        <id>Q8VCF0</id>
    </interactant>
    <interactant intactId="EBI-520135">
        <id>Q60803</id>
        <label>Traf3</label>
    </interactant>
    <organismsDiffer>false</organismsDiffer>
    <experiments>4</experiments>
</comment>
<comment type="subcellular location">
    <subcellularLocation>
        <location evidence="1">Mitochondrion outer membrane</location>
        <topology evidence="1">Single-pass membrane protein</topology>
    </subcellularLocation>
    <subcellularLocation>
        <location evidence="6">Mitochondrion</location>
    </subcellularLocation>
    <subcellularLocation>
        <location evidence="1">Peroxisome</location>
    </subcellularLocation>
</comment>
<comment type="domain">
    <text evidence="1">Both CARD and transmembrane domains are essential for antiviral function. The CARD domain is responsible for interaction with RIGI and IFIH1/MDA5 (By similarity).</text>
</comment>
<comment type="domain">
    <text evidence="1">The transmembrane domain and residues 285-420 are essential for its interaction with DHX58/LGP2.</text>
</comment>
<comment type="domain">
    <text evidence="1">The pLxIS motif constitutes an IRF3-binding motif: following phosphorylation by TBK1, the phosphorylated pLxIS motif of MAVS recruits IRF3. IRF3 is then phosphorylated and activated by TBK1 to induce type-I interferons and other cytokines.</text>
</comment>
<comment type="domain">
    <text evidence="1">Both CARD and transmembrane domains are essential for antiviral function. The CARD domain is responsible for interaction with RIGI and IFIH1/MDA5.</text>
</comment>
<comment type="domain">
    <text evidence="1">The transmembrane domain and residues 300-444 are essential for its interaction with DHX58/LGP2.</text>
</comment>
<comment type="PTM">
    <text evidence="1">Following activation, phosphorylated by TBK1 at Ser-418 in the pLxIS motif. The phosphorylated pLxIS motif constitutes an IRF3-binding motif, leading to recruitment of the transcription factor IRF3 to induce type-I interferons and other cytokines.</text>
</comment>
<comment type="PTM">
    <text evidence="1">Ubiquitinated. Undergoes 'Lys-48'-linked polyubiquitination catalyzed by ITCH; ITCH-dependent polyubiquitination is mediated by the interaction with PCBP2 and leads to MAVS/IPS1 proteasomal degradation. Ubiquitinated by RNF125, leading to its degradation by the proteasome. Undergoes 'Lys-48'-linked ubiquitination catalyzed by SMURF1. Undergoes 'Lys-48'-linked ubiquitination catalyzed by MARCHF5 at Lys-7, leading to proteasomal degradation (By similarity). Ubiquitinated via 'Lys-63'-linked ubiquitination at Lys-10 by TRIM31, promoting MAVS polymerization and formation of three-stranded helical filaments on mitochondria. Undergoes 'Lys-63'-linked ubiquitination leading to enhanced interaction between MAVS and TRAF2. Undergoes 'Lys-27'-linked ubiquitination by UBE2N and TRIM21 leading to enhanced interaction between MAVS and TBK1 (By similarity). Deubiquitinated by USP10 leading to attenuation of RIGI-mediated MAVS aggregation and production of type I interferon (By similarity). Undergoes 'Lys-48'-linked polyubiquitination catalyzed by RNF115 leading to its degradation (By similarity).</text>
</comment>
<comment type="PTM">
    <text evidence="1">Proteolytically cleaved by apoptotic caspases during apoptosis, leading to its inactivation. Cleavage by CASP3 during virus-induced apoptosis inactivates it, preventing cytokine overproduction.</text>
</comment>
<comment type="PTM">
    <text evidence="1">Palmitoylated by ZHDDC4. Palmitoylation promotes MAVS stabilization and activation by inhibiting 'Lys-48'- but facilitating 'Lys-63'-linked ubiquitination.</text>
</comment>
<sequence>MTFAEDKTYKYIRDNHSKFCCVDVLEILPYLSCLTASDQDRLRASYRQIGNRDTLWGLFNNLQRRPGWVEVFIRALQICELPGLADQVTRVYQSYLPPGTSLRSLEPLQLPDFPAAVSGPSAFAPGHNIPDHGLRETPSCPKPVQDTQPPESPVENSEQLLQTNSGAVARMSGGSLIPSPNQQALSPQPSREHQEQEPELGGAHAANVASVPIATYGPVSPTVSFQPLPRTALRTNLLSGVTVSALSADTSLSSSSTGSAFAKGAGDQAKAATCFSTTLTNSVTTSSVPSPRLVPVKTMSSKLPLSSKSTAAMTSTVLTNTAPSKLPSNSVYAGTVPSRVPASVAKAPANTIPPERNSKQAKETPEGPATKVTTGGNQTGPNSSIRSLHSGPEMSKPGVLVSQLDEPFSACSVDLAISPSSSLVSEPNHGPEENEYSSFRIQVDESPSADLLGSPEPLATQQPQEEEEHCASSMPWAKWLGATSALLAVFLAVMLYRSRRLAQ</sequence>
<organism>
    <name type="scientific">Mus musculus</name>
    <name type="common">Mouse</name>
    <dbReference type="NCBI Taxonomy" id="10090"/>
    <lineage>
        <taxon>Eukaryota</taxon>
        <taxon>Metazoa</taxon>
        <taxon>Chordata</taxon>
        <taxon>Craniata</taxon>
        <taxon>Vertebrata</taxon>
        <taxon>Euteleostomi</taxon>
        <taxon>Mammalia</taxon>
        <taxon>Eutheria</taxon>
        <taxon>Euarchontoglires</taxon>
        <taxon>Glires</taxon>
        <taxon>Rodentia</taxon>
        <taxon>Myomorpha</taxon>
        <taxon>Muroidea</taxon>
        <taxon>Muridae</taxon>
        <taxon>Murinae</taxon>
        <taxon>Mus</taxon>
        <taxon>Mus</taxon>
    </lineage>
</organism>
<accession>Q8VCF0</accession>
<reference key="1">
    <citation type="journal article" date="2005" name="Cell">
        <title>Identification and characterization of MAVS, a mitochondrial antiviral signaling protein that activates NF-kappaB and IRF 3.</title>
        <authorList>
            <person name="Seth R.B."/>
            <person name="Sun L."/>
            <person name="Ea C.-K."/>
            <person name="Chen Z.J."/>
        </authorList>
    </citation>
    <scope>NUCLEOTIDE SEQUENCE [MRNA]</scope>
</reference>
<reference key="2">
    <citation type="journal article" date="2005" name="Mol. Cell">
        <title>VISA is an adapter protein required for virus-triggered IFN-beta Signaling.</title>
        <authorList>
            <person name="Xu L.-G."/>
            <person name="Wang Y.-Y."/>
            <person name="Han K.-J."/>
            <person name="Li L.-Y."/>
            <person name="Zhai Z."/>
            <person name="Shu H.-B."/>
        </authorList>
    </citation>
    <scope>NUCLEOTIDE SEQUENCE [MRNA]</scope>
</reference>
<reference key="3">
    <citation type="journal article" date="2005" name="Nature">
        <title>Cardif is an adaptor protein in the RIG-I antiviral pathway and is targeted by hepatitis C virus.</title>
        <authorList>
            <person name="Meylan E."/>
            <person name="Curran J."/>
            <person name="Hofmann K."/>
            <person name="Moradpour D."/>
            <person name="Binder M."/>
            <person name="Bartenschlager R."/>
            <person name="Tschopp J."/>
        </authorList>
    </citation>
    <scope>NUCLEOTIDE SEQUENCE [MRNA]</scope>
</reference>
<reference key="4">
    <citation type="journal article" date="2005" name="Science">
        <title>The transcriptional landscape of the mammalian genome.</title>
        <authorList>
            <person name="Carninci P."/>
            <person name="Kasukawa T."/>
            <person name="Katayama S."/>
            <person name="Gough J."/>
            <person name="Frith M.C."/>
            <person name="Maeda N."/>
            <person name="Oyama R."/>
            <person name="Ravasi T."/>
            <person name="Lenhard B."/>
            <person name="Wells C."/>
            <person name="Kodzius R."/>
            <person name="Shimokawa K."/>
            <person name="Bajic V.B."/>
            <person name="Brenner S.E."/>
            <person name="Batalov S."/>
            <person name="Forrest A.R."/>
            <person name="Zavolan M."/>
            <person name="Davis M.J."/>
            <person name="Wilming L.G."/>
            <person name="Aidinis V."/>
            <person name="Allen J.E."/>
            <person name="Ambesi-Impiombato A."/>
            <person name="Apweiler R."/>
            <person name="Aturaliya R.N."/>
            <person name="Bailey T.L."/>
            <person name="Bansal M."/>
            <person name="Baxter L."/>
            <person name="Beisel K.W."/>
            <person name="Bersano T."/>
            <person name="Bono H."/>
            <person name="Chalk A.M."/>
            <person name="Chiu K.P."/>
            <person name="Choudhary V."/>
            <person name="Christoffels A."/>
            <person name="Clutterbuck D.R."/>
            <person name="Crowe M.L."/>
            <person name="Dalla E."/>
            <person name="Dalrymple B.P."/>
            <person name="de Bono B."/>
            <person name="Della Gatta G."/>
            <person name="di Bernardo D."/>
            <person name="Down T."/>
            <person name="Engstrom P."/>
            <person name="Fagiolini M."/>
            <person name="Faulkner G."/>
            <person name="Fletcher C.F."/>
            <person name="Fukushima T."/>
            <person name="Furuno M."/>
            <person name="Futaki S."/>
            <person name="Gariboldi M."/>
            <person name="Georgii-Hemming P."/>
            <person name="Gingeras T.R."/>
            <person name="Gojobori T."/>
            <person name="Green R.E."/>
            <person name="Gustincich S."/>
            <person name="Harbers M."/>
            <person name="Hayashi Y."/>
            <person name="Hensch T.K."/>
            <person name="Hirokawa N."/>
            <person name="Hill D."/>
            <person name="Huminiecki L."/>
            <person name="Iacono M."/>
            <person name="Ikeo K."/>
            <person name="Iwama A."/>
            <person name="Ishikawa T."/>
            <person name="Jakt M."/>
            <person name="Kanapin A."/>
            <person name="Katoh M."/>
            <person name="Kawasawa Y."/>
            <person name="Kelso J."/>
            <person name="Kitamura H."/>
            <person name="Kitano H."/>
            <person name="Kollias G."/>
            <person name="Krishnan S.P."/>
            <person name="Kruger A."/>
            <person name="Kummerfeld S.K."/>
            <person name="Kurochkin I.V."/>
            <person name="Lareau L.F."/>
            <person name="Lazarevic D."/>
            <person name="Lipovich L."/>
            <person name="Liu J."/>
            <person name="Liuni S."/>
            <person name="McWilliam S."/>
            <person name="Madan Babu M."/>
            <person name="Madera M."/>
            <person name="Marchionni L."/>
            <person name="Matsuda H."/>
            <person name="Matsuzawa S."/>
            <person name="Miki H."/>
            <person name="Mignone F."/>
            <person name="Miyake S."/>
            <person name="Morris K."/>
            <person name="Mottagui-Tabar S."/>
            <person name="Mulder N."/>
            <person name="Nakano N."/>
            <person name="Nakauchi H."/>
            <person name="Ng P."/>
            <person name="Nilsson R."/>
            <person name="Nishiguchi S."/>
            <person name="Nishikawa S."/>
            <person name="Nori F."/>
            <person name="Ohara O."/>
            <person name="Okazaki Y."/>
            <person name="Orlando V."/>
            <person name="Pang K.C."/>
            <person name="Pavan W.J."/>
            <person name="Pavesi G."/>
            <person name="Pesole G."/>
            <person name="Petrovsky N."/>
            <person name="Piazza S."/>
            <person name="Reed J."/>
            <person name="Reid J.F."/>
            <person name="Ring B.Z."/>
            <person name="Ringwald M."/>
            <person name="Rost B."/>
            <person name="Ruan Y."/>
            <person name="Salzberg S.L."/>
            <person name="Sandelin A."/>
            <person name="Schneider C."/>
            <person name="Schoenbach C."/>
            <person name="Sekiguchi K."/>
            <person name="Semple C.A."/>
            <person name="Seno S."/>
            <person name="Sessa L."/>
            <person name="Sheng Y."/>
            <person name="Shibata Y."/>
            <person name="Shimada H."/>
            <person name="Shimada K."/>
            <person name="Silva D."/>
            <person name="Sinclair B."/>
            <person name="Sperling S."/>
            <person name="Stupka E."/>
            <person name="Sugiura K."/>
            <person name="Sultana R."/>
            <person name="Takenaka Y."/>
            <person name="Taki K."/>
            <person name="Tammoja K."/>
            <person name="Tan S.L."/>
            <person name="Tang S."/>
            <person name="Taylor M.S."/>
            <person name="Tegner J."/>
            <person name="Teichmann S.A."/>
            <person name="Ueda H.R."/>
            <person name="van Nimwegen E."/>
            <person name="Verardo R."/>
            <person name="Wei C.L."/>
            <person name="Yagi K."/>
            <person name="Yamanishi H."/>
            <person name="Zabarovsky E."/>
            <person name="Zhu S."/>
            <person name="Zimmer A."/>
            <person name="Hide W."/>
            <person name="Bult C."/>
            <person name="Grimmond S.M."/>
            <person name="Teasdale R.D."/>
            <person name="Liu E.T."/>
            <person name="Brusic V."/>
            <person name="Quackenbush J."/>
            <person name="Wahlestedt C."/>
            <person name="Mattick J.S."/>
            <person name="Hume D.A."/>
            <person name="Kai C."/>
            <person name="Sasaki D."/>
            <person name="Tomaru Y."/>
            <person name="Fukuda S."/>
            <person name="Kanamori-Katayama M."/>
            <person name="Suzuki M."/>
            <person name="Aoki J."/>
            <person name="Arakawa T."/>
            <person name="Iida J."/>
            <person name="Imamura K."/>
            <person name="Itoh M."/>
            <person name="Kato T."/>
            <person name="Kawaji H."/>
            <person name="Kawagashira N."/>
            <person name="Kawashima T."/>
            <person name="Kojima M."/>
            <person name="Kondo S."/>
            <person name="Konno H."/>
            <person name="Nakano K."/>
            <person name="Ninomiya N."/>
            <person name="Nishio T."/>
            <person name="Okada M."/>
            <person name="Plessy C."/>
            <person name="Shibata K."/>
            <person name="Shiraki T."/>
            <person name="Suzuki S."/>
            <person name="Tagami M."/>
            <person name="Waki K."/>
            <person name="Watahiki A."/>
            <person name="Okamura-Oho Y."/>
            <person name="Suzuki H."/>
            <person name="Kawai J."/>
            <person name="Hayashizaki Y."/>
        </authorList>
    </citation>
    <scope>NUCLEOTIDE SEQUENCE [LARGE SCALE MRNA]</scope>
    <source>
        <strain>C57BL/6J</strain>
        <tissue>Liver</tissue>
    </source>
</reference>
<reference key="5">
    <citation type="journal article" date="2004" name="Genome Res.">
        <title>The status, quality, and expansion of the NIH full-length cDNA project: the Mammalian Gene Collection (MGC).</title>
        <authorList>
            <consortium name="The MGC Project Team"/>
        </authorList>
    </citation>
    <scope>NUCLEOTIDE SEQUENCE [LARGE SCALE MRNA]</scope>
    <source>
        <strain>FVB/N</strain>
        <tissue>Eye</tissue>
        <tissue>Liver</tissue>
        <tissue>Salivary gland</tissue>
    </source>
</reference>
<reference key="6">
    <citation type="journal article" date="2007" name="Proc. Natl. Acad. Sci. U.S.A.">
        <title>Large-scale phosphorylation analysis of mouse liver.</title>
        <authorList>
            <person name="Villen J."/>
            <person name="Beausoleil S.A."/>
            <person name="Gerber S.A."/>
            <person name="Gygi S.P."/>
        </authorList>
    </citation>
    <scope>PHOSPHORYLATION [LARGE SCALE ANALYSIS] AT SER-152 AND SER-384</scope>
    <scope>IDENTIFICATION BY MASS SPECTROMETRY [LARGE SCALE ANALYSIS]</scope>
    <source>
        <tissue>Liver</tissue>
    </source>
</reference>
<reference key="7">
    <citation type="journal article" date="2008" name="J. Biol. Chem.">
        <title>FLN29 deficiency reveals its negative regulatory role in the Toll-like receptor (TLR) and retinoic acid-inducible gene I (RIG-I)-like helicase signaling pathway.</title>
        <authorList>
            <person name="Sanada T."/>
            <person name="Takaesu G."/>
            <person name="Mashima R."/>
            <person name="Yoshida R."/>
            <person name="Kobayashi T."/>
            <person name="Yoshimura A."/>
        </authorList>
    </citation>
    <scope>INTERACTION WITH TRAFD1</scope>
</reference>
<reference key="8">
    <citation type="journal article" date="2010" name="Cell">
        <title>A tissue-specific atlas of mouse protein phosphorylation and expression.</title>
        <authorList>
            <person name="Huttlin E.L."/>
            <person name="Jedrychowski M.P."/>
            <person name="Elias J.E."/>
            <person name="Goswami T."/>
            <person name="Rad R."/>
            <person name="Beausoleil S.A."/>
            <person name="Villen J."/>
            <person name="Haas W."/>
            <person name="Sowa M.E."/>
            <person name="Gygi S.P."/>
        </authorList>
    </citation>
    <scope>PHOSPHORYLATION [LARGE SCALE ANALYSIS] AT SER-152; SER-172 AND SER-384</scope>
    <scope>IDENTIFICATION BY MASS SPECTROMETRY [LARGE SCALE ANALYSIS]</scope>
    <source>
        <tissue>Brown adipose tissue</tissue>
        <tissue>Heart</tissue>
        <tissue>Kidney</tissue>
        <tissue>Liver</tissue>
        <tissue>Lung</tissue>
        <tissue>Pancreas</tissue>
        <tissue>Spleen</tissue>
        <tissue>Testis</tissue>
    </source>
</reference>
<reference key="9">
    <citation type="journal article" date="2012" name="J. Immunol.">
        <title>Ndfip1 negatively regulates RIG-I-dependent immune signaling by enhancing E3 ligase Smurf1-mediated MAVS degradation.</title>
        <authorList>
            <person name="Wang Y."/>
            <person name="Tong X."/>
            <person name="Ye X."/>
        </authorList>
    </citation>
    <scope>INTERACTION WITH SMURF1</scope>
</reference>
<reference key="10">
    <citation type="journal article" date="2013" name="Cell">
        <title>The adaptor MAVS promotes NLRP3 mitochondrial localization and inflammasome activation.</title>
        <authorList>
            <person name="Subramanian N."/>
            <person name="Natarajan K."/>
            <person name="Clatworthy M.R."/>
            <person name="Wang Z."/>
            <person name="Germain R.N."/>
        </authorList>
    </citation>
    <scope>FUNCTION</scope>
    <scope>SUBCELLULAR LOCATION</scope>
    <scope>INTERACTION WITH NLRP3</scope>
</reference>
<reference key="11">
    <citation type="journal article" date="2014" name="Cell. Mol. Immunol.">
        <title>The interaction between the helicase DHX33 and IPS-1 as a novel pathway to sense double-stranded RNA and RNA viruses in myeloid dendritic cells.</title>
        <authorList>
            <person name="Liu Y."/>
            <person name="Lu N."/>
            <person name="Yuan B."/>
            <person name="Weng L."/>
            <person name="Wang F."/>
            <person name="Liu Y.J."/>
            <person name="Zhang Z."/>
        </authorList>
    </citation>
    <scope>FUNCTION</scope>
    <scope>INTERACTION WITH DHX33</scope>
</reference>
<reference key="12">
    <citation type="journal article" date="2014" name="Mol. Cell. Proteomics">
        <title>Immunoaffinity enrichment and mass spectrometry analysis of protein methylation.</title>
        <authorList>
            <person name="Guo A."/>
            <person name="Gu H."/>
            <person name="Zhou J."/>
            <person name="Mulhern D."/>
            <person name="Wang Y."/>
            <person name="Lee K.A."/>
            <person name="Yang V."/>
            <person name="Aguiar M."/>
            <person name="Kornhauser J."/>
            <person name="Jia X."/>
            <person name="Ren J."/>
            <person name="Beausoleil S.A."/>
            <person name="Silva J.C."/>
            <person name="Vemulapalli V."/>
            <person name="Bedford M.T."/>
            <person name="Comb M.J."/>
        </authorList>
    </citation>
    <scope>METHYLATION [LARGE SCALE ANALYSIS] AT ARG-234</scope>
    <scope>IDENTIFICATION BY MASS SPECTROMETRY [LARGE SCALE ANALYSIS]</scope>
    <source>
        <tissue>Brain</tissue>
    </source>
</reference>
<reference key="13">
    <citation type="journal article" date="2019" name="Nat. Cell Biol.">
        <title>Mitochondria-localised ZNFX1 functions as a dsRNA sensor to initiate antiviral responses through MAVS.</title>
        <authorList>
            <person name="Wang Y."/>
            <person name="Yuan S."/>
            <person name="Jia X."/>
            <person name="Ge Y."/>
            <person name="Ling T."/>
            <person name="Nie M."/>
            <person name="Lan X."/>
            <person name="Chen S."/>
            <person name="Xu A."/>
        </authorList>
    </citation>
    <scope>INTERACTION WITH ZNFX1</scope>
</reference>
<keyword id="KW-0002">3D-structure</keyword>
<keyword id="KW-0051">Antiviral defense</keyword>
<keyword id="KW-0945">Host-virus interaction</keyword>
<keyword id="KW-0391">Immunity</keyword>
<keyword id="KW-0399">Innate immunity</keyword>
<keyword id="KW-1017">Isopeptide bond</keyword>
<keyword id="KW-0449">Lipoprotein</keyword>
<keyword id="KW-0472">Membrane</keyword>
<keyword id="KW-0488">Methylation</keyword>
<keyword id="KW-0496">Mitochondrion</keyword>
<keyword id="KW-1000">Mitochondrion outer membrane</keyword>
<keyword id="KW-0564">Palmitate</keyword>
<keyword id="KW-0576">Peroxisome</keyword>
<keyword id="KW-0597">Phosphoprotein</keyword>
<keyword id="KW-1185">Reference proteome</keyword>
<keyword id="KW-0812">Transmembrane</keyword>
<keyword id="KW-1133">Transmembrane helix</keyword>
<keyword id="KW-0832">Ubl conjugation</keyword>
<proteinExistence type="evidence at protein level"/>
<protein>
    <recommendedName>
        <fullName evidence="10">Mitochondrial antiviral-signaling protein</fullName>
        <shortName evidence="10">MAVS</shortName>
    </recommendedName>
    <alternativeName>
        <fullName>CARD adapter inducing interferon beta</fullName>
        <shortName>Cardif</shortName>
    </alternativeName>
    <alternativeName>
        <fullName>Interferon beta promoter stimulator protein 1</fullName>
        <shortName evidence="9">IPS-1</shortName>
    </alternativeName>
    <alternativeName>
        <fullName>Virus-induced-signaling adapter</fullName>
        <shortName evidence="9">VISA</shortName>
    </alternativeName>
</protein>